<dbReference type="EC" id="2.7.4.3" evidence="3 4"/>
<dbReference type="EC" id="2.7.4.4" evidence="4"/>
<dbReference type="EC" id="2.7.4.6" evidence="1 3"/>
<dbReference type="PIR" id="A00682">
    <property type="entry name" value="KIPGA"/>
</dbReference>
<dbReference type="RefSeq" id="XP_003122225.3">
    <property type="nucleotide sequence ID" value="XM_003122177.6"/>
</dbReference>
<dbReference type="RefSeq" id="XP_005660509.1">
    <property type="nucleotide sequence ID" value="XM_005660452.3"/>
</dbReference>
<dbReference type="PDB" id="3ADK">
    <property type="method" value="X-ray"/>
    <property type="resolution" value="2.10 A"/>
    <property type="chains" value="A=1-194"/>
</dbReference>
<dbReference type="PDBsum" id="3ADK"/>
<dbReference type="SMR" id="P00571"/>
<dbReference type="FunCoup" id="P00571">
    <property type="interactions" value="1057"/>
</dbReference>
<dbReference type="STRING" id="9823.ENSSSCP00000033755"/>
<dbReference type="iPTMnet" id="P00571"/>
<dbReference type="PaxDb" id="9823-ENSSSCP00000006028"/>
<dbReference type="PeptideAtlas" id="P00571"/>
<dbReference type="Ensembl" id="ENSSSCT00000006187.4">
    <property type="protein sequence ID" value="ENSSSCP00000006028.3"/>
    <property type="gene ID" value="ENSSSCG00000005627.4"/>
</dbReference>
<dbReference type="Ensembl" id="ENSSSCT00015081508.1">
    <property type="protein sequence ID" value="ENSSSCP00015032986.1"/>
    <property type="gene ID" value="ENSSSCG00015060480.1"/>
</dbReference>
<dbReference type="Ensembl" id="ENSSSCT00025061292.1">
    <property type="protein sequence ID" value="ENSSSCP00025026029.1"/>
    <property type="gene ID" value="ENSSSCG00025045130.1"/>
</dbReference>
<dbReference type="Ensembl" id="ENSSSCT00030102473.1">
    <property type="protein sequence ID" value="ENSSSCP00030047275.1"/>
    <property type="gene ID" value="ENSSSCG00030073169.1"/>
</dbReference>
<dbReference type="Ensembl" id="ENSSSCT00035030554.1">
    <property type="protein sequence ID" value="ENSSSCP00035011914.1"/>
    <property type="gene ID" value="ENSSSCG00035023319.1"/>
</dbReference>
<dbReference type="Ensembl" id="ENSSSCT00045014609.1">
    <property type="protein sequence ID" value="ENSSSCP00045010135.1"/>
    <property type="gene ID" value="ENSSSCG00045008653.1"/>
</dbReference>
<dbReference type="Ensembl" id="ENSSSCT00050017947.1">
    <property type="protein sequence ID" value="ENSSSCP00050007413.1"/>
    <property type="gene ID" value="ENSSSCG00050013292.1"/>
</dbReference>
<dbReference type="Ensembl" id="ENSSSCT00055035865.1">
    <property type="protein sequence ID" value="ENSSSCP00055028487.1"/>
    <property type="gene ID" value="ENSSSCG00055017917.1"/>
</dbReference>
<dbReference type="Ensembl" id="ENSSSCT00055035936.1">
    <property type="protein sequence ID" value="ENSSSCP00055028537.1"/>
    <property type="gene ID" value="ENSSSCG00055017917.1"/>
</dbReference>
<dbReference type="Ensembl" id="ENSSSCT00055035994.1">
    <property type="protein sequence ID" value="ENSSSCP00055028584.1"/>
    <property type="gene ID" value="ENSSSCG00055017917.1"/>
</dbReference>
<dbReference type="Ensembl" id="ENSSSCT00065104781.1">
    <property type="protein sequence ID" value="ENSSSCP00065046509.1"/>
    <property type="gene ID" value="ENSSSCG00065075808.1"/>
</dbReference>
<dbReference type="Ensembl" id="ENSSSCT00105012579">
    <property type="protein sequence ID" value="ENSSSCP00105009344"/>
    <property type="gene ID" value="ENSSSCG00105006161"/>
</dbReference>
<dbReference type="Ensembl" id="ENSSSCT00110062299">
    <property type="protein sequence ID" value="ENSSSCP00110043577"/>
    <property type="gene ID" value="ENSSSCG00110032627"/>
</dbReference>
<dbReference type="Ensembl" id="ENSSSCT00115035044">
    <property type="protein sequence ID" value="ENSSSCP00115033235"/>
    <property type="gene ID" value="ENSSSCG00115019796"/>
</dbReference>
<dbReference type="Ensembl" id="ENSSSCT00130064115">
    <property type="protein sequence ID" value="ENSSSCP00130045938"/>
    <property type="gene ID" value="ENSSSCG00130032828"/>
</dbReference>
<dbReference type="GeneID" id="100521423"/>
<dbReference type="KEGG" id="ssc:100521423"/>
<dbReference type="CTD" id="203"/>
<dbReference type="VGNC" id="VGNC:97875">
    <property type="gene designation" value="AK1"/>
</dbReference>
<dbReference type="eggNOG" id="KOG3079">
    <property type="taxonomic scope" value="Eukaryota"/>
</dbReference>
<dbReference type="GeneTree" id="ENSGT00940000158325"/>
<dbReference type="HOGENOM" id="CLU_032354_0_3_1"/>
<dbReference type="InParanoid" id="P00571"/>
<dbReference type="OrthoDB" id="442176at2759"/>
<dbReference type="TreeFam" id="TF354283"/>
<dbReference type="Reactome" id="R-SSC-499943">
    <property type="pathway name" value="Interconversion of nucleotide di- and triphosphates"/>
</dbReference>
<dbReference type="EvolutionaryTrace" id="P00571"/>
<dbReference type="Proteomes" id="UP000008227">
    <property type="component" value="Chromosome 1"/>
</dbReference>
<dbReference type="Proteomes" id="UP000314985">
    <property type="component" value="Unplaced"/>
</dbReference>
<dbReference type="Proteomes" id="UP000694570">
    <property type="component" value="Unplaced"/>
</dbReference>
<dbReference type="Proteomes" id="UP000694571">
    <property type="component" value="Unplaced"/>
</dbReference>
<dbReference type="Proteomes" id="UP000694720">
    <property type="component" value="Unplaced"/>
</dbReference>
<dbReference type="Proteomes" id="UP000694722">
    <property type="component" value="Unplaced"/>
</dbReference>
<dbReference type="Proteomes" id="UP000694723">
    <property type="component" value="Unplaced"/>
</dbReference>
<dbReference type="Proteomes" id="UP000694724">
    <property type="component" value="Unplaced"/>
</dbReference>
<dbReference type="Proteomes" id="UP000694725">
    <property type="component" value="Unplaced"/>
</dbReference>
<dbReference type="Proteomes" id="UP000694726">
    <property type="component" value="Unplaced"/>
</dbReference>
<dbReference type="Proteomes" id="UP000694727">
    <property type="component" value="Unplaced"/>
</dbReference>
<dbReference type="Proteomes" id="UP000694728">
    <property type="component" value="Unplaced"/>
</dbReference>
<dbReference type="GO" id="GO:0005737">
    <property type="term" value="C:cytoplasm"/>
    <property type="evidence" value="ECO:0007669"/>
    <property type="project" value="UniProtKB-SubCell"/>
</dbReference>
<dbReference type="GO" id="GO:0004017">
    <property type="term" value="F:adenylate kinase activity"/>
    <property type="evidence" value="ECO:0000314"/>
    <property type="project" value="UniProtKB"/>
</dbReference>
<dbReference type="GO" id="GO:0005524">
    <property type="term" value="F:ATP binding"/>
    <property type="evidence" value="ECO:0007669"/>
    <property type="project" value="UniProtKB-KW"/>
</dbReference>
<dbReference type="GO" id="GO:0047506">
    <property type="term" value="F:deoxyadenylate kinase activity"/>
    <property type="evidence" value="ECO:0007669"/>
    <property type="project" value="RHEA"/>
</dbReference>
<dbReference type="GO" id="GO:0004550">
    <property type="term" value="F:nucleoside diphosphate kinase activity"/>
    <property type="evidence" value="ECO:0000250"/>
    <property type="project" value="UniProtKB"/>
</dbReference>
<dbReference type="GO" id="GO:0006172">
    <property type="term" value="P:ADP biosynthetic process"/>
    <property type="evidence" value="ECO:0007669"/>
    <property type="project" value="UniProtKB-UniRule"/>
</dbReference>
<dbReference type="GO" id="GO:0046033">
    <property type="term" value="P:AMP metabolic process"/>
    <property type="evidence" value="ECO:0007669"/>
    <property type="project" value="UniProtKB-UniRule"/>
</dbReference>
<dbReference type="GO" id="GO:0046034">
    <property type="term" value="P:ATP metabolic process"/>
    <property type="evidence" value="ECO:0007669"/>
    <property type="project" value="UniProtKB-UniRule"/>
</dbReference>
<dbReference type="GO" id="GO:0009142">
    <property type="term" value="P:nucleoside triphosphate biosynthetic process"/>
    <property type="evidence" value="ECO:0007669"/>
    <property type="project" value="InterPro"/>
</dbReference>
<dbReference type="CDD" id="cd01428">
    <property type="entry name" value="ADK"/>
    <property type="match status" value="1"/>
</dbReference>
<dbReference type="FunFam" id="3.40.50.300:FF:000315">
    <property type="entry name" value="Adenylate kinase 1"/>
    <property type="match status" value="1"/>
</dbReference>
<dbReference type="Gene3D" id="3.40.50.300">
    <property type="entry name" value="P-loop containing nucleotide triphosphate hydrolases"/>
    <property type="match status" value="1"/>
</dbReference>
<dbReference type="HAMAP" id="MF_00235">
    <property type="entry name" value="Adenylate_kinase_Adk"/>
    <property type="match status" value="1"/>
</dbReference>
<dbReference type="HAMAP" id="MF_03171">
    <property type="entry name" value="Adenylate_kinase_AK1"/>
    <property type="match status" value="1"/>
</dbReference>
<dbReference type="InterPro" id="IPR000850">
    <property type="entry name" value="Adenylat/UMP-CMP_kin"/>
</dbReference>
<dbReference type="InterPro" id="IPR033690">
    <property type="entry name" value="Adenylat_kinase_CS"/>
</dbReference>
<dbReference type="InterPro" id="IPR028582">
    <property type="entry name" value="AK1"/>
</dbReference>
<dbReference type="InterPro" id="IPR006267">
    <property type="entry name" value="AK1/5"/>
</dbReference>
<dbReference type="InterPro" id="IPR027417">
    <property type="entry name" value="P-loop_NTPase"/>
</dbReference>
<dbReference type="NCBIfam" id="TIGR01360">
    <property type="entry name" value="aden_kin_iso1"/>
    <property type="match status" value="1"/>
</dbReference>
<dbReference type="NCBIfam" id="NF011100">
    <property type="entry name" value="PRK14527.1"/>
    <property type="match status" value="1"/>
</dbReference>
<dbReference type="PANTHER" id="PTHR23359">
    <property type="entry name" value="NUCLEOTIDE KINASE"/>
    <property type="match status" value="1"/>
</dbReference>
<dbReference type="Pfam" id="PF00406">
    <property type="entry name" value="ADK"/>
    <property type="match status" value="1"/>
</dbReference>
<dbReference type="PRINTS" id="PR00094">
    <property type="entry name" value="ADENYLTKNASE"/>
</dbReference>
<dbReference type="SUPFAM" id="SSF52540">
    <property type="entry name" value="P-loop containing nucleoside triphosphate hydrolases"/>
    <property type="match status" value="1"/>
</dbReference>
<dbReference type="PROSITE" id="PS00113">
    <property type="entry name" value="ADENYLATE_KINASE"/>
    <property type="match status" value="1"/>
</dbReference>
<sequence>MEEKLKKSKIIFVVGGPGSGKGTQCEKIVQKYGYTHLSTGDLLRAEVSSGSARGKMLSEIMEKGQLVPLETVLDMLRDAMVAKVDTSKGFLIDGYPREVKQGEEFERKIGQPTLLLYVDAGPETMTKRLLKRGETSGRVDDNEETIKKRLETYYKATEPVIAFYEKRGIVRKVNAEGSVDDVFSQVCTHLDTLK</sequence>
<proteinExistence type="evidence at protein level"/>
<name>KAD1_PIG</name>
<gene>
    <name evidence="3" type="primary">AK1</name>
</gene>
<comment type="function">
    <text evidence="1 3 4 5">Catalyzes the reversible transfer of the terminal phosphate group between ATP and AMP (PubMed:2551297). Also displays broad nucleoside diphosphate kinase activity. Plays an important role in cellular energy homeostasis and in adenine nucleotide metabolism (By similarity). Also catalyzes at a very low rate the synthesis of thiamine triphosphate (ThTP) from thiamine diphosphate (ThDP) and ADP (PubMed:2551297, PubMed:2551298).</text>
</comment>
<comment type="catalytic activity">
    <reaction evidence="4">
        <text>a ribonucleoside 5'-phosphate + ATP = a ribonucleoside 5'-diphosphate + ADP</text>
        <dbReference type="Rhea" id="RHEA:24036"/>
        <dbReference type="ChEBI" id="CHEBI:30616"/>
        <dbReference type="ChEBI" id="CHEBI:57930"/>
        <dbReference type="ChEBI" id="CHEBI:58043"/>
        <dbReference type="ChEBI" id="CHEBI:456216"/>
        <dbReference type="EC" id="2.7.4.4"/>
    </reaction>
</comment>
<comment type="catalytic activity">
    <reaction evidence="3 4">
        <text>AMP + ATP = 2 ADP</text>
        <dbReference type="Rhea" id="RHEA:12973"/>
        <dbReference type="ChEBI" id="CHEBI:30616"/>
        <dbReference type="ChEBI" id="CHEBI:456215"/>
        <dbReference type="ChEBI" id="CHEBI:456216"/>
        <dbReference type="EC" id="2.7.4.3"/>
    </reaction>
</comment>
<comment type="catalytic activity">
    <reaction evidence="1">
        <text>dAMP + ATP = dADP + ADP</text>
        <dbReference type="Rhea" id="RHEA:23100"/>
        <dbReference type="ChEBI" id="CHEBI:30616"/>
        <dbReference type="ChEBI" id="CHEBI:57667"/>
        <dbReference type="ChEBI" id="CHEBI:58245"/>
        <dbReference type="ChEBI" id="CHEBI:456216"/>
    </reaction>
</comment>
<comment type="catalytic activity">
    <reaction evidence="2">
        <text>dATP + AMP = dADP + ADP</text>
        <dbReference type="Rhea" id="RHEA:79899"/>
        <dbReference type="ChEBI" id="CHEBI:57667"/>
        <dbReference type="ChEBI" id="CHEBI:61404"/>
        <dbReference type="ChEBI" id="CHEBI:456215"/>
        <dbReference type="ChEBI" id="CHEBI:456216"/>
    </reaction>
</comment>
<comment type="catalytic activity">
    <reaction evidence="2">
        <text>dAMP + dATP = 2 dADP</text>
        <dbReference type="Rhea" id="RHEA:78311"/>
        <dbReference type="ChEBI" id="CHEBI:57667"/>
        <dbReference type="ChEBI" id="CHEBI:58245"/>
        <dbReference type="ChEBI" id="CHEBI:61404"/>
    </reaction>
</comment>
<comment type="catalytic activity">
    <reaction evidence="1 3">
        <text>a 2'-deoxyribonucleoside 5'-diphosphate + ATP = a 2'-deoxyribonucleoside 5'-triphosphate + ADP</text>
        <dbReference type="Rhea" id="RHEA:44640"/>
        <dbReference type="ChEBI" id="CHEBI:30616"/>
        <dbReference type="ChEBI" id="CHEBI:61560"/>
        <dbReference type="ChEBI" id="CHEBI:73316"/>
        <dbReference type="ChEBI" id="CHEBI:456216"/>
        <dbReference type="EC" id="2.7.4.6"/>
    </reaction>
</comment>
<comment type="catalytic activity">
    <reaction evidence="1">
        <text>a ribonucleoside 5'-diphosphate + ATP = a ribonucleoside 5'-triphosphate + ADP</text>
        <dbReference type="Rhea" id="RHEA:18113"/>
        <dbReference type="ChEBI" id="CHEBI:30616"/>
        <dbReference type="ChEBI" id="CHEBI:57930"/>
        <dbReference type="ChEBI" id="CHEBI:61557"/>
        <dbReference type="ChEBI" id="CHEBI:456216"/>
        <dbReference type="EC" id="2.7.4.6"/>
    </reaction>
</comment>
<comment type="catalytic activity">
    <reaction evidence="1">
        <text>CDP + GTP = CTP + GDP</text>
        <dbReference type="Rhea" id="RHEA:79859"/>
        <dbReference type="ChEBI" id="CHEBI:37563"/>
        <dbReference type="ChEBI" id="CHEBI:37565"/>
        <dbReference type="ChEBI" id="CHEBI:58069"/>
        <dbReference type="ChEBI" id="CHEBI:58189"/>
    </reaction>
</comment>
<comment type="catalytic activity">
    <reaction evidence="1">
        <text>GDP + ATP = GTP + ADP</text>
        <dbReference type="Rhea" id="RHEA:27686"/>
        <dbReference type="ChEBI" id="CHEBI:30616"/>
        <dbReference type="ChEBI" id="CHEBI:37565"/>
        <dbReference type="ChEBI" id="CHEBI:58189"/>
        <dbReference type="ChEBI" id="CHEBI:456216"/>
        <dbReference type="EC" id="2.7.4.6"/>
    </reaction>
</comment>
<comment type="catalytic activity">
    <reaction evidence="1">
        <text>UDP + ATP = UTP + ADP</text>
        <dbReference type="Rhea" id="RHEA:25098"/>
        <dbReference type="ChEBI" id="CHEBI:30616"/>
        <dbReference type="ChEBI" id="CHEBI:46398"/>
        <dbReference type="ChEBI" id="CHEBI:58223"/>
        <dbReference type="ChEBI" id="CHEBI:456216"/>
        <dbReference type="EC" id="2.7.4.6"/>
    </reaction>
</comment>
<comment type="catalytic activity">
    <reaction evidence="1">
        <text>GTP + UDP = UTP + GDP</text>
        <dbReference type="Rhea" id="RHEA:79863"/>
        <dbReference type="ChEBI" id="CHEBI:37565"/>
        <dbReference type="ChEBI" id="CHEBI:46398"/>
        <dbReference type="ChEBI" id="CHEBI:58189"/>
        <dbReference type="ChEBI" id="CHEBI:58223"/>
    </reaction>
</comment>
<comment type="catalytic activity">
    <reaction evidence="1">
        <text>dTDP + GTP = dTTP + GDP</text>
        <dbReference type="Rhea" id="RHEA:79867"/>
        <dbReference type="ChEBI" id="CHEBI:37565"/>
        <dbReference type="ChEBI" id="CHEBI:37568"/>
        <dbReference type="ChEBI" id="CHEBI:58189"/>
        <dbReference type="ChEBI" id="CHEBI:58369"/>
    </reaction>
</comment>
<comment type="catalytic activity">
    <reaction evidence="1">
        <text>dCDP + GTP = dCTP + GDP</text>
        <dbReference type="Rhea" id="RHEA:79875"/>
        <dbReference type="ChEBI" id="CHEBI:37565"/>
        <dbReference type="ChEBI" id="CHEBI:58189"/>
        <dbReference type="ChEBI" id="CHEBI:58593"/>
        <dbReference type="ChEBI" id="CHEBI:61481"/>
    </reaction>
</comment>
<comment type="catalytic activity">
    <reaction evidence="1">
        <text>dGDP + ATP = dGTP + ADP</text>
        <dbReference type="Rhea" id="RHEA:27690"/>
        <dbReference type="ChEBI" id="CHEBI:30616"/>
        <dbReference type="ChEBI" id="CHEBI:58595"/>
        <dbReference type="ChEBI" id="CHEBI:61429"/>
        <dbReference type="ChEBI" id="CHEBI:456216"/>
        <dbReference type="EC" id="2.7.4.6"/>
    </reaction>
</comment>
<comment type="catalytic activity">
    <reaction evidence="1">
        <text>dADP + GTP = dATP + GDP</text>
        <dbReference type="Rhea" id="RHEA:79871"/>
        <dbReference type="ChEBI" id="CHEBI:37565"/>
        <dbReference type="ChEBI" id="CHEBI:57667"/>
        <dbReference type="ChEBI" id="CHEBI:58189"/>
        <dbReference type="ChEBI" id="CHEBI:61404"/>
    </reaction>
</comment>
<comment type="catalytic activity">
    <reaction evidence="4 5">
        <text>thiamine diphosphate + ADP = thiamine triphosphate + AMP</text>
        <dbReference type="Rhea" id="RHEA:69180"/>
        <dbReference type="ChEBI" id="CHEBI:58937"/>
        <dbReference type="ChEBI" id="CHEBI:58938"/>
        <dbReference type="ChEBI" id="CHEBI:456215"/>
        <dbReference type="ChEBI" id="CHEBI:456216"/>
    </reaction>
</comment>
<comment type="cofactor">
    <cofactor evidence="10 11">
        <name>Mg(2+)</name>
        <dbReference type="ChEBI" id="CHEBI:18420"/>
    </cofactor>
</comment>
<comment type="biophysicochemical properties">
    <kinetics>
        <KM evidence="5">0.83 mM for ThDP</KM>
        <KM evidence="5">43 mM for ADP</KM>
    </kinetics>
    <phDependence>
        <text evidence="5">Optimum pH is 10.0 for ThTP synthesis.</text>
    </phDependence>
    <temperatureDependence>
        <text evidence="5">Optimum temperature is 37 degrees Celsius for ThTP synthesis.</text>
    </temperatureDependence>
</comment>
<comment type="subunit">
    <text evidence="1 3">Monomer.</text>
</comment>
<comment type="subcellular location">
    <subcellularLocation>
        <location evidence="1 3">Cytoplasm</location>
    </subcellularLocation>
</comment>
<comment type="domain">
    <text evidence="3 12 13">Consists of three domains, a large central CORE domain and two small peripheral domains, NMPbind and LID, which undergo movements during catalysis. The LID domain closes over the site of phosphoryl transfer upon ATP binding. Assembling and dissambling the active center during each catalytic cycle provides an effective means to prevent ATP hydrolysis.</text>
</comment>
<comment type="similarity">
    <text evidence="3">Belongs to the adenylate kinase family. AK1 subfamily.</text>
</comment>
<accession>P00571</accession>
<evidence type="ECO:0000250" key="1">
    <source>
        <dbReference type="UniProtKB" id="P00568"/>
    </source>
</evidence>
<evidence type="ECO:0000250" key="2">
    <source>
        <dbReference type="UniProtKB" id="P05081"/>
    </source>
</evidence>
<evidence type="ECO:0000255" key="3">
    <source>
        <dbReference type="HAMAP-Rule" id="MF_03171"/>
    </source>
</evidence>
<evidence type="ECO:0000269" key="4">
    <source>
    </source>
</evidence>
<evidence type="ECO:0000269" key="5">
    <source>
    </source>
</evidence>
<evidence type="ECO:0000269" key="6">
    <source>
    </source>
</evidence>
<evidence type="ECO:0000269" key="7">
    <source>
    </source>
</evidence>
<evidence type="ECO:0000269" key="8">
    <source>
    </source>
</evidence>
<evidence type="ECO:0000269" key="9">
    <source>
    </source>
</evidence>
<evidence type="ECO:0000305" key="10">
    <source>
    </source>
</evidence>
<evidence type="ECO:0000305" key="11">
    <source>
    </source>
</evidence>
<evidence type="ECO:0000305" key="12">
    <source>
    </source>
</evidence>
<evidence type="ECO:0000305" key="13">
    <source>
    </source>
</evidence>
<evidence type="ECO:0007829" key="14">
    <source>
        <dbReference type="PDB" id="3ADK"/>
    </source>
</evidence>
<reference key="1">
    <citation type="journal article" date="1974" name="Eur. J. Biochem.">
        <title>The amino-acid sequence of sarcine adenylate kinase from skeletal muscle.</title>
        <authorList>
            <person name="Heil A."/>
            <person name="Mueller G."/>
            <person name="Noda L."/>
            <person name="Pinder T."/>
            <person name="Schirmer R.H."/>
            <person name="Schirmer I."/>
            <person name="von Zabern I."/>
        </authorList>
    </citation>
    <scope>PROTEIN SEQUENCE</scope>
    <scope>ACETYLATION AT MET-1</scope>
    <source>
        <tissue>Skeletal muscle</tissue>
    </source>
</reference>
<reference key="2">
    <citation type="journal article" date="1986" name="Proc. Natl. Acad. Sci. U.S.A.">
        <title>ATP-binding site of adenylate kinase: mechanistic implications of its homology with ras-encoded p21, F1-ATPase, and other nucleotide-binding proteins.</title>
        <authorList>
            <person name="Fry D.C."/>
            <person name="Kuby S.A."/>
            <person name="Mildvan A.S."/>
        </authorList>
    </citation>
    <scope>ATP-BINDING SITE</scope>
</reference>
<reference key="3">
    <citation type="journal article" date="1989" name="Biochem. Int.">
        <title>Cytosolic adenylate kinase catalyzes the synthesis of thiamin triphosphate from thiamin diphosphate.</title>
        <authorList>
            <person name="Shikata H."/>
            <person name="Koyama S."/>
            <person name="Egi Y."/>
            <person name="Yamada K."/>
            <person name="Kawasaki T."/>
        </authorList>
    </citation>
    <scope>FUNCTION</scope>
    <scope>CATALYTIC ACTIVITY</scope>
    <scope>COFACTOR</scope>
</reference>
<reference key="4">
    <citation type="journal article" date="1989" name="Biochem. Int.">
        <title>Properties of the thiamin triphosphate-synthesizing activity catalyzed by adenylate kinase (isoenzyme 1).</title>
        <authorList>
            <person name="Shikata H."/>
            <person name="Egi Y."/>
            <person name="Koyama S."/>
            <person name="Yamada K."/>
            <person name="Kawasaki T."/>
        </authorList>
    </citation>
    <scope>FUNCTION</scope>
    <scope>CATALYTIC ACTIVITY</scope>
    <scope>BIOPHYSICOCHEMICAL PROPERTIES</scope>
    <scope>COFACTOR</scope>
</reference>
<reference key="5">
    <citation type="journal article" date="1974" name="Nature">
        <title>Three dimensional structure of adenyl kinase.</title>
        <authorList>
            <person name="Schulz G.E."/>
            <person name="Elzinga M."/>
            <person name="Marx F."/>
            <person name="Schirmer R.H."/>
        </authorList>
    </citation>
    <scope>X-RAY CRYSTALLOGRAPHY (3.0 ANGSTROMS)</scope>
</reference>
<reference key="6">
    <citation type="journal article" date="1988" name="J. Mol. Biol.">
        <title>Refined structure of porcine cytosolic adenylate kinase at 2.1 A resolution.</title>
        <authorList>
            <person name="Dreusicke D."/>
            <person name="Karplus P.A."/>
            <person name="Schulz G.E."/>
        </authorList>
    </citation>
    <scope>X-RAY CRYSTALLOGRAPHY (2.1 ANGSTROMS)</scope>
</reference>
<organism>
    <name type="scientific">Sus scrofa</name>
    <name type="common">Pig</name>
    <dbReference type="NCBI Taxonomy" id="9823"/>
    <lineage>
        <taxon>Eukaryota</taxon>
        <taxon>Metazoa</taxon>
        <taxon>Chordata</taxon>
        <taxon>Craniata</taxon>
        <taxon>Vertebrata</taxon>
        <taxon>Euteleostomi</taxon>
        <taxon>Mammalia</taxon>
        <taxon>Eutheria</taxon>
        <taxon>Laurasiatheria</taxon>
        <taxon>Artiodactyla</taxon>
        <taxon>Suina</taxon>
        <taxon>Suidae</taxon>
        <taxon>Sus</taxon>
    </lineage>
</organism>
<feature type="chain" id="PRO_0000158912" description="Adenylate kinase isoenzyme 1">
    <location>
        <begin position="1"/>
        <end position="194"/>
    </location>
</feature>
<feature type="region of interest" description="NMP" evidence="3 6 9">
    <location>
        <begin position="38"/>
        <end position="67"/>
    </location>
</feature>
<feature type="region of interest" description="LID" evidence="3 6 9">
    <location>
        <begin position="131"/>
        <end position="141"/>
    </location>
</feature>
<feature type="binding site" evidence="3 7">
    <location>
        <begin position="18"/>
        <end position="23"/>
    </location>
    <ligand>
        <name>ATP</name>
        <dbReference type="ChEBI" id="CHEBI:30616"/>
    </ligand>
</feature>
<feature type="binding site" evidence="3">
    <location>
        <position position="39"/>
    </location>
    <ligand>
        <name>AMP</name>
        <dbReference type="ChEBI" id="CHEBI:456215"/>
    </ligand>
</feature>
<feature type="binding site" evidence="3">
    <location>
        <position position="44"/>
    </location>
    <ligand>
        <name>AMP</name>
        <dbReference type="ChEBI" id="CHEBI:456215"/>
    </ligand>
</feature>
<feature type="binding site" evidence="3">
    <location>
        <begin position="65"/>
        <end position="67"/>
    </location>
    <ligand>
        <name>AMP</name>
        <dbReference type="ChEBI" id="CHEBI:456215"/>
    </ligand>
</feature>
<feature type="binding site" evidence="3">
    <location>
        <begin position="94"/>
        <end position="97"/>
    </location>
    <ligand>
        <name>AMP</name>
        <dbReference type="ChEBI" id="CHEBI:456215"/>
    </ligand>
</feature>
<feature type="binding site" evidence="3">
    <location>
        <position position="101"/>
    </location>
    <ligand>
        <name>AMP</name>
        <dbReference type="ChEBI" id="CHEBI:456215"/>
    </ligand>
</feature>
<feature type="binding site" evidence="3">
    <location>
        <position position="132"/>
    </location>
    <ligand>
        <name>ATP</name>
        <dbReference type="ChEBI" id="CHEBI:30616"/>
    </ligand>
</feature>
<feature type="binding site" evidence="3">
    <location>
        <position position="138"/>
    </location>
    <ligand>
        <name>AMP</name>
        <dbReference type="ChEBI" id="CHEBI:456215"/>
    </ligand>
</feature>
<feature type="binding site" evidence="3">
    <location>
        <position position="149"/>
    </location>
    <ligand>
        <name>AMP</name>
        <dbReference type="ChEBI" id="CHEBI:456215"/>
    </ligand>
</feature>
<feature type="binding site" evidence="3">
    <location>
        <position position="177"/>
    </location>
    <ligand>
        <name>ATP</name>
        <dbReference type="ChEBI" id="CHEBI:30616"/>
    </ligand>
</feature>
<feature type="modified residue" description="N-acetylmethionine" evidence="3 8">
    <location>
        <position position="1"/>
    </location>
</feature>
<feature type="modified residue" description="Phosphoserine" evidence="1">
    <location>
        <position position="38"/>
    </location>
</feature>
<feature type="helix" evidence="14">
    <location>
        <begin position="2"/>
        <end position="6"/>
    </location>
</feature>
<feature type="strand" evidence="14">
    <location>
        <begin position="10"/>
        <end position="15"/>
    </location>
</feature>
<feature type="helix" evidence="14">
    <location>
        <begin position="21"/>
        <end position="31"/>
    </location>
</feature>
<feature type="strand" evidence="14">
    <location>
        <begin position="35"/>
        <end position="38"/>
    </location>
</feature>
<feature type="helix" evidence="14">
    <location>
        <begin position="39"/>
        <end position="49"/>
    </location>
</feature>
<feature type="helix" evidence="14">
    <location>
        <begin position="52"/>
        <end position="61"/>
    </location>
</feature>
<feature type="turn" evidence="14">
    <location>
        <begin position="62"/>
        <end position="64"/>
    </location>
</feature>
<feature type="helix" evidence="14">
    <location>
        <begin position="69"/>
        <end position="81"/>
    </location>
</feature>
<feature type="turn" evidence="14">
    <location>
        <begin position="82"/>
        <end position="86"/>
    </location>
</feature>
<feature type="strand" evidence="14">
    <location>
        <begin position="90"/>
        <end position="94"/>
    </location>
</feature>
<feature type="helix" evidence="14">
    <location>
        <begin position="99"/>
        <end position="108"/>
    </location>
</feature>
<feature type="strand" evidence="14">
    <location>
        <begin position="113"/>
        <end position="119"/>
    </location>
</feature>
<feature type="helix" evidence="14">
    <location>
        <begin position="122"/>
        <end position="136"/>
    </location>
</feature>
<feature type="helix" evidence="14">
    <location>
        <begin position="146"/>
        <end position="156"/>
    </location>
</feature>
<feature type="helix" evidence="14">
    <location>
        <begin position="158"/>
        <end position="164"/>
    </location>
</feature>
<feature type="turn" evidence="14">
    <location>
        <begin position="165"/>
        <end position="168"/>
    </location>
</feature>
<feature type="strand" evidence="14">
    <location>
        <begin position="170"/>
        <end position="174"/>
    </location>
</feature>
<feature type="helix" evidence="14">
    <location>
        <begin position="179"/>
        <end position="191"/>
    </location>
</feature>
<keyword id="KW-0002">3D-structure</keyword>
<keyword id="KW-0007">Acetylation</keyword>
<keyword id="KW-0067">ATP-binding</keyword>
<keyword id="KW-0963">Cytoplasm</keyword>
<keyword id="KW-0903">Direct protein sequencing</keyword>
<keyword id="KW-0418">Kinase</keyword>
<keyword id="KW-0547">Nucleotide-binding</keyword>
<keyword id="KW-0597">Phosphoprotein</keyword>
<keyword id="KW-1185">Reference proteome</keyword>
<keyword id="KW-0808">Transferase</keyword>
<protein>
    <recommendedName>
        <fullName evidence="3">Adenylate kinase isoenzyme 1</fullName>
        <shortName evidence="3">AK 1</shortName>
        <ecNumber evidence="3 4">2.7.4.3</ecNumber>
        <ecNumber evidence="4">2.7.4.4</ecNumber>
        <ecNumber evidence="1 3">2.7.4.6</ecNumber>
    </recommendedName>
    <alternativeName>
        <fullName evidence="3">ATP-AMP transphosphorylase 1</fullName>
    </alternativeName>
    <alternativeName>
        <fullName evidence="3">ATP:AMP phosphotransferase</fullName>
    </alternativeName>
    <alternativeName>
        <fullName evidence="3">Adenylate monophosphate kinase</fullName>
    </alternativeName>
    <alternativeName>
        <fullName evidence="3">Myokinase</fullName>
    </alternativeName>
</protein>